<gene>
    <name type="primary">CFAP52</name>
    <name type="synonym">WDR16</name>
</gene>
<evidence type="ECO:0000250" key="1">
    <source>
        <dbReference type="UniProtKB" id="E1BKF9"/>
    </source>
</evidence>
<evidence type="ECO:0000250" key="2">
    <source>
        <dbReference type="UniProtKB" id="Q5F201"/>
    </source>
</evidence>
<evidence type="ECO:0000250" key="3">
    <source>
        <dbReference type="UniProtKB" id="Q8N1V2"/>
    </source>
</evidence>
<evidence type="ECO:0000255" key="4"/>
<evidence type="ECO:0000269" key="5">
    <source>
    </source>
</evidence>
<evidence type="ECO:0000305" key="6"/>
<organism>
    <name type="scientific">Sus scrofa</name>
    <name type="common">Pig</name>
    <dbReference type="NCBI Taxonomy" id="9823"/>
    <lineage>
        <taxon>Eukaryota</taxon>
        <taxon>Metazoa</taxon>
        <taxon>Chordata</taxon>
        <taxon>Craniata</taxon>
        <taxon>Vertebrata</taxon>
        <taxon>Euteleostomi</taxon>
        <taxon>Mammalia</taxon>
        <taxon>Eutheria</taxon>
        <taxon>Laurasiatheria</taxon>
        <taxon>Artiodactyla</taxon>
        <taxon>Suina</taxon>
        <taxon>Suidae</taxon>
        <taxon>Sus</taxon>
    </lineage>
</organism>
<accession>F1SS88</accession>
<sequence>MENQIQPKAEVAKLELEAVIGFNGHVPTGLKCHPDQEHLIYPLGCTILIQAIKTQEQNFLHGHSNNVSCVTISKSGVYIASGQVTFMGFKADIILWDYKKRELMARLSLHKGKIEALAFSPNDLYLVSLGGPDDGSVVVWSIAKTEAICGSPAAGLNVGNATSVVFSQCHDEMFVTAGNGTIRVWELDLPNRKIWPTECQTGQMKRIVMSISMASDDSFFYLGTTTGDILKMNPRTKLLADTGPAKDKFSLGVSAIKCLKTGGLLVGSGAGLLVFCRSPSYKPIKKIQLQGGITSISLRGEGHQFFVGTEESHIYRVNFTDFKETLVTTCHFEAVEDVVFPFGTAELFATCAKKDIRVWHTLSNRELLRITVPNMTCHGIDFMRDGKSLISAWDDGKIRAFAPETGRLMYVISNAHRIGVTAVATTSDCTRVISGGGEGEVRVWQIGHQTQKLEEALKEHKSSVSCIRVKKNNEECVTASTDGTCIIWDLVRLRRNQMILANTLFQCVCYHPEEFQIITSGTDRKIAYWEVFDGSGIRELDGSLSGSINGMDITPEGVHFVTGGNDHLVKVWDYNEGEVTHVGVGHSGNITRVRISPGNEYIVSVSADGAILRWKYPFPS</sequence>
<name>CFA52_PIG</name>
<comment type="function">
    <text evidence="1 3 5">Microtubule inner protein (MIP) part of the dynein-decorated doublet microtubules (DMTs) in cilia axoneme (By similarity). Important for proper ciliary and flagellar beating. May act in cooperation with CFAP45 and axonemal dynein subunit DNAH11 (PubMed:33139725). May play a role in cell growth and/or survival (By similarity).</text>
</comment>
<comment type="subunit">
    <text evidence="2 5">Microtubule inner protein component of sperm flagellar doublet microtubules (By similarity). Interacts with BRCA2. Interacts with the CCT chaperonin complex. Interacts with HSP70. Interacts with AK8 (PubMed:33139725). Interacts with CFAP45 (PubMed:33139725). Interacts with DNAI1 (PubMed:33139725). Interacts with IQDC (PubMed:33139725).</text>
</comment>
<comment type="subcellular location">
    <subcellularLocation>
        <location evidence="3">Cytoplasm</location>
    </subcellularLocation>
    <subcellularLocation>
        <location evidence="3">Cytoplasm</location>
        <location evidence="3">Cytoskeleton</location>
        <location evidence="3">Cilium axoneme</location>
    </subcellularLocation>
    <subcellularLocation>
        <location evidence="2">Cytoplasm</location>
        <location evidence="2">Cytoskeleton</location>
        <location evidence="2">Flagellum axoneme</location>
    </subcellularLocation>
    <text evidence="3">Located in the proximal region of respiratory cilia.</text>
</comment>
<comment type="tissue specificity">
    <text evidence="5">Expressed in respiratory cells and sperm (at protein level).</text>
</comment>
<comment type="similarity">
    <text evidence="6">Belongs to the CFAP52 family.</text>
</comment>
<feature type="chain" id="PRO_0000454204" description="Cilia- and flagella-associated protein 52">
    <location>
        <begin position="1"/>
        <end position="620"/>
    </location>
</feature>
<feature type="repeat" description="WD 1" evidence="4">
    <location>
        <begin position="62"/>
        <end position="106"/>
    </location>
</feature>
<feature type="repeat" description="WD 2" evidence="4">
    <location>
        <begin position="109"/>
        <end position="150"/>
    </location>
</feature>
<feature type="repeat" description="WD 3" evidence="4">
    <location>
        <begin position="156"/>
        <end position="195"/>
    </location>
</feature>
<feature type="repeat" description="WD 4" evidence="4">
    <location>
        <begin position="203"/>
        <end position="242"/>
    </location>
</feature>
<feature type="repeat" description="WD 5" evidence="4">
    <location>
        <begin position="288"/>
        <end position="327"/>
    </location>
</feature>
<feature type="repeat" description="WD 6" evidence="4">
    <location>
        <begin position="330"/>
        <end position="369"/>
    </location>
</feature>
<feature type="repeat" description="WD 7" evidence="4">
    <location>
        <begin position="372"/>
        <end position="411"/>
    </location>
</feature>
<feature type="repeat" description="WD 8" evidence="4">
    <location>
        <begin position="415"/>
        <end position="454"/>
    </location>
</feature>
<feature type="repeat" description="WD 9" evidence="4">
    <location>
        <begin position="459"/>
        <end position="498"/>
    </location>
</feature>
<feature type="repeat" description="WD 10" evidence="4">
    <location>
        <begin position="500"/>
        <end position="539"/>
    </location>
</feature>
<feature type="repeat" description="WD 11" evidence="4">
    <location>
        <begin position="543"/>
        <end position="582"/>
    </location>
</feature>
<feature type="repeat" description="WD 12" evidence="4">
    <location>
        <begin position="585"/>
        <end position="620"/>
    </location>
</feature>
<proteinExistence type="evidence at protein level"/>
<keyword id="KW-0002">3D-structure</keyword>
<keyword id="KW-0966">Cell projection</keyword>
<keyword id="KW-0969">Cilium</keyword>
<keyword id="KW-0963">Cytoplasm</keyword>
<keyword id="KW-0206">Cytoskeleton</keyword>
<keyword id="KW-0282">Flagellum</keyword>
<keyword id="KW-0597">Phosphoprotein</keyword>
<keyword id="KW-1185">Reference proteome</keyword>
<keyword id="KW-0677">Repeat</keyword>
<keyword id="KW-0853">WD repeat</keyword>
<dbReference type="EMBL" id="AEMK02000082">
    <property type="status" value="NOT_ANNOTATED_CDS"/>
    <property type="molecule type" value="Genomic_DNA"/>
</dbReference>
<dbReference type="EMBL" id="DQIR01081353">
    <property type="protein sequence ID" value="HDA36829.1"/>
    <property type="molecule type" value="Transcribed_RNA"/>
</dbReference>
<dbReference type="EMBL" id="DQIR01277339">
    <property type="protein sequence ID" value="HDC32817.1"/>
    <property type="molecule type" value="Transcribed_RNA"/>
</dbReference>
<dbReference type="EMBL" id="DQIR01277340">
    <property type="protein sequence ID" value="HDC32818.1"/>
    <property type="molecule type" value="Transcribed_RNA"/>
</dbReference>
<dbReference type="RefSeq" id="XP_020921925.1">
    <property type="nucleotide sequence ID" value="XM_021066266.1"/>
</dbReference>
<dbReference type="PDB" id="9CPC">
    <property type="method" value="EM"/>
    <property type="resolution" value="3.65 A"/>
    <property type="chains" value="1S/1T/1U=1-620"/>
</dbReference>
<dbReference type="PDBsum" id="9CPC"/>
<dbReference type="EMDB" id="EMD-45802"/>
<dbReference type="SMR" id="F1SS88"/>
<dbReference type="FunCoup" id="F1SS88">
    <property type="interactions" value="66"/>
</dbReference>
<dbReference type="STRING" id="9823.ENSSSCP00000019064"/>
<dbReference type="PaxDb" id="9823-ENSSSCP00000019064"/>
<dbReference type="Ensembl" id="ENSSSCT00000019583.4">
    <property type="protein sequence ID" value="ENSSSCP00000019064.3"/>
    <property type="gene ID" value="ENSSSCG00000017994.5"/>
</dbReference>
<dbReference type="Ensembl" id="ENSSSCT00035081562.1">
    <property type="protein sequence ID" value="ENSSSCP00035033763.1"/>
    <property type="gene ID" value="ENSSSCG00035060745.1"/>
</dbReference>
<dbReference type="Ensembl" id="ENSSSCT00065035553.1">
    <property type="protein sequence ID" value="ENSSSCP00065014881.1"/>
    <property type="gene ID" value="ENSSSCG00065026448.1"/>
</dbReference>
<dbReference type="Ensembl" id="ENSSSCT00070045918.1">
    <property type="protein sequence ID" value="ENSSSCP00070038716.1"/>
    <property type="gene ID" value="ENSSSCG00070023059.1"/>
</dbReference>
<dbReference type="GeneID" id="100516337"/>
<dbReference type="VGNC" id="VGNC:86602">
    <property type="gene designation" value="CFAP52"/>
</dbReference>
<dbReference type="eggNOG" id="KOG0266">
    <property type="taxonomic scope" value="Eukaryota"/>
</dbReference>
<dbReference type="GeneTree" id="ENSGT00940000157016"/>
<dbReference type="HOGENOM" id="CLU_2014538_0_0_1"/>
<dbReference type="InParanoid" id="F1SS88"/>
<dbReference type="OMA" id="RIMVYNF"/>
<dbReference type="OrthoDB" id="6252103at2759"/>
<dbReference type="Proteomes" id="UP000008227">
    <property type="component" value="Chromosome 12"/>
</dbReference>
<dbReference type="Proteomes" id="UP000314985">
    <property type="component" value="Chromosome 12"/>
</dbReference>
<dbReference type="Proteomes" id="UP000694570">
    <property type="component" value="Unplaced"/>
</dbReference>
<dbReference type="Proteomes" id="UP000694571">
    <property type="component" value="Unplaced"/>
</dbReference>
<dbReference type="Proteomes" id="UP000694720">
    <property type="component" value="Unplaced"/>
</dbReference>
<dbReference type="Proteomes" id="UP000694722">
    <property type="component" value="Unplaced"/>
</dbReference>
<dbReference type="Proteomes" id="UP000694723">
    <property type="component" value="Unplaced"/>
</dbReference>
<dbReference type="Proteomes" id="UP000694724">
    <property type="component" value="Unplaced"/>
</dbReference>
<dbReference type="Proteomes" id="UP000694725">
    <property type="component" value="Unplaced"/>
</dbReference>
<dbReference type="Proteomes" id="UP000694726">
    <property type="component" value="Unplaced"/>
</dbReference>
<dbReference type="Proteomes" id="UP000694727">
    <property type="component" value="Unplaced"/>
</dbReference>
<dbReference type="Proteomes" id="UP000694728">
    <property type="component" value="Unplaced"/>
</dbReference>
<dbReference type="Bgee" id="ENSSSCG00000017994">
    <property type="expression patterns" value="Expressed in testis and 25 other cell types or tissues"/>
</dbReference>
<dbReference type="ExpressionAtlas" id="F1SS88">
    <property type="expression patterns" value="baseline"/>
</dbReference>
<dbReference type="GO" id="GO:0097729">
    <property type="term" value="C:9+2 motile cilium"/>
    <property type="evidence" value="ECO:0000314"/>
    <property type="project" value="GO_Central"/>
</dbReference>
<dbReference type="GO" id="GO:0160112">
    <property type="term" value="C:axonemal B tubule inner sheath"/>
    <property type="evidence" value="ECO:0000250"/>
    <property type="project" value="UniProtKB"/>
</dbReference>
<dbReference type="GO" id="GO:0005879">
    <property type="term" value="C:axonemal microtubule"/>
    <property type="evidence" value="ECO:0000250"/>
    <property type="project" value="UniProtKB"/>
</dbReference>
<dbReference type="GO" id="GO:0005930">
    <property type="term" value="C:axoneme"/>
    <property type="evidence" value="ECO:0000314"/>
    <property type="project" value="GO_Central"/>
</dbReference>
<dbReference type="GO" id="GO:0036126">
    <property type="term" value="C:sperm flagellum"/>
    <property type="evidence" value="ECO:0000250"/>
    <property type="project" value="UniProtKB"/>
</dbReference>
<dbReference type="GO" id="GO:0097225">
    <property type="term" value="C:sperm midpiece"/>
    <property type="evidence" value="ECO:0007669"/>
    <property type="project" value="Ensembl"/>
</dbReference>
<dbReference type="GO" id="GO:0061966">
    <property type="term" value="P:establishment of left/right asymmetry"/>
    <property type="evidence" value="ECO:0007669"/>
    <property type="project" value="Ensembl"/>
</dbReference>
<dbReference type="GO" id="GO:0030317">
    <property type="term" value="P:flagellated sperm motility"/>
    <property type="evidence" value="ECO:0000250"/>
    <property type="project" value="UniProtKB"/>
</dbReference>
<dbReference type="GO" id="GO:0010467">
    <property type="term" value="P:gene expression"/>
    <property type="evidence" value="ECO:0007669"/>
    <property type="project" value="Ensembl"/>
</dbReference>
<dbReference type="GO" id="GO:0051012">
    <property type="term" value="P:microtubule sliding"/>
    <property type="evidence" value="ECO:0007669"/>
    <property type="project" value="Ensembl"/>
</dbReference>
<dbReference type="GO" id="GO:0007338">
    <property type="term" value="P:single fertilization"/>
    <property type="evidence" value="ECO:0007669"/>
    <property type="project" value="Ensembl"/>
</dbReference>
<dbReference type="GO" id="GO:0007286">
    <property type="term" value="P:spermatid development"/>
    <property type="evidence" value="ECO:0007669"/>
    <property type="project" value="Ensembl"/>
</dbReference>
<dbReference type="FunFam" id="2.130.10.10:FF:000173">
    <property type="entry name" value="Cilia- and flagella-associated protein 52"/>
    <property type="match status" value="1"/>
</dbReference>
<dbReference type="FunFam" id="2.130.10.10:FF:000207">
    <property type="entry name" value="Cilia- and flagella-associated protein 52"/>
    <property type="match status" value="1"/>
</dbReference>
<dbReference type="FunFam" id="2.130.10.10:FF:000291">
    <property type="entry name" value="Cilia-and flagella-associated protein 52 isoform X1"/>
    <property type="match status" value="1"/>
</dbReference>
<dbReference type="Gene3D" id="2.130.10.10">
    <property type="entry name" value="YVTN repeat-like/Quinoprotein amine dehydrogenase"/>
    <property type="match status" value="3"/>
</dbReference>
<dbReference type="InterPro" id="IPR015943">
    <property type="entry name" value="WD40/YVTN_repeat-like_dom_sf"/>
</dbReference>
<dbReference type="InterPro" id="IPR019775">
    <property type="entry name" value="WD40_repeat_CS"/>
</dbReference>
<dbReference type="InterPro" id="IPR036322">
    <property type="entry name" value="WD40_repeat_dom_sf"/>
</dbReference>
<dbReference type="InterPro" id="IPR001680">
    <property type="entry name" value="WD40_rpt"/>
</dbReference>
<dbReference type="InterPro" id="IPR050630">
    <property type="entry name" value="WD_repeat_EMAP"/>
</dbReference>
<dbReference type="PANTHER" id="PTHR13720:SF14">
    <property type="entry name" value="CILIA- AND FLAGELLA-ASSOCIATED PROTEIN 52"/>
    <property type="match status" value="1"/>
</dbReference>
<dbReference type="PANTHER" id="PTHR13720">
    <property type="entry name" value="WD-40 REPEAT PROTEIN"/>
    <property type="match status" value="1"/>
</dbReference>
<dbReference type="Pfam" id="PF00400">
    <property type="entry name" value="WD40"/>
    <property type="match status" value="6"/>
</dbReference>
<dbReference type="SMART" id="SM00320">
    <property type="entry name" value="WD40"/>
    <property type="match status" value="11"/>
</dbReference>
<dbReference type="SUPFAM" id="SSF50978">
    <property type="entry name" value="WD40 repeat-like"/>
    <property type="match status" value="2"/>
</dbReference>
<dbReference type="PROSITE" id="PS00678">
    <property type="entry name" value="WD_REPEATS_1"/>
    <property type="match status" value="1"/>
</dbReference>
<dbReference type="PROSITE" id="PS50082">
    <property type="entry name" value="WD_REPEATS_2"/>
    <property type="match status" value="5"/>
</dbReference>
<dbReference type="PROSITE" id="PS50294">
    <property type="entry name" value="WD_REPEATS_REGION"/>
    <property type="match status" value="2"/>
</dbReference>
<protein>
    <recommendedName>
        <fullName>Cilia- and flagella-associated protein 52</fullName>
    </recommendedName>
    <alternativeName>
        <fullName>WD repeat-containing protein 16</fullName>
    </alternativeName>
</protein>
<reference key="1">
    <citation type="submission" date="2009-11" db="EMBL/GenBank/DDBJ databases">
        <authorList>
            <consortium name="Porcine genome sequencing project"/>
        </authorList>
    </citation>
    <scope>NUCLEOTIDE SEQUENCE [LARGE SCALE GENOMIC DNA]</scope>
    <source>
        <strain>Duroc</strain>
    </source>
</reference>
<reference key="2">
    <citation type="journal article" date="2019" name="PeerJ">
        <title>Genes of the pig, Sus scrofa, reconstructed with EvidentialGene.</title>
        <authorList>
            <person name="Gilbert D.G."/>
        </authorList>
    </citation>
    <scope>IDENTIFICATION</scope>
</reference>
<reference key="3">
    <citation type="journal article" date="2020" name="Nat. Commun.">
        <title>CFAP45 deficiency causes situs abnormalities and asthenospermia by disrupting an axonemal adenine nucleotide homeostasis module.</title>
        <authorList>
            <person name="Dougherty G.W."/>
            <person name="Mizuno K."/>
            <person name="Noethe-Menchen T."/>
            <person name="Ikawa Y."/>
            <person name="Boldt K."/>
            <person name="Ta-Shma A."/>
            <person name="Aprea I."/>
            <person name="Minegishi K."/>
            <person name="Pang Y.P."/>
            <person name="Pennekamp P."/>
            <person name="Loges N.T."/>
            <person name="Raidt J."/>
            <person name="Hjeij R."/>
            <person name="Wallmeier J."/>
            <person name="Mussaffi H."/>
            <person name="Perles Z."/>
            <person name="Elpeleg O."/>
            <person name="Rabert F."/>
            <person name="Shiratori H."/>
            <person name="Letteboer S.J."/>
            <person name="Horn N."/>
            <person name="Young S."/>
            <person name="Struenker T."/>
            <person name="Stumme F."/>
            <person name="Werner C."/>
            <person name="Olbrich H."/>
            <person name="Takaoka K."/>
            <person name="Ide T."/>
            <person name="Twan W.K."/>
            <person name="Biebach L."/>
            <person name="Grosse-Onnebrink J."/>
            <person name="Klinkenbusch J.A."/>
            <person name="Praveen K."/>
            <person name="Bracht D.C."/>
            <person name="Hoeben I.M."/>
            <person name="Junger K."/>
            <person name="Guetzlaff J."/>
            <person name="Cindric S."/>
            <person name="Aviram M."/>
            <person name="Kaiser T."/>
            <person name="Memari Y."/>
            <person name="Dzeja P.P."/>
            <person name="Dworniczak B."/>
            <person name="Ueffing M."/>
            <person name="Roepman R."/>
            <person name="Bartscherer K."/>
            <person name="Katsanis N."/>
            <person name="Davis E.E."/>
            <person name="Amirav I."/>
            <person name="Hamada H."/>
            <person name="Omran H."/>
        </authorList>
    </citation>
    <scope>FUNCTION</scope>
    <scope>INTERACTION WITH AK8; CFAP45; DNAI1 AND IQDC</scope>
    <scope>TISSUE SPECIFICITY</scope>
</reference>